<geneLocation type="mitochondrion"/>
<evidence type="ECO:0000250" key="1"/>
<evidence type="ECO:0000250" key="2">
    <source>
        <dbReference type="UniProtKB" id="P00157"/>
    </source>
</evidence>
<evidence type="ECO:0000250" key="3">
    <source>
        <dbReference type="UniProtKB" id="P00163"/>
    </source>
</evidence>
<evidence type="ECO:0000255" key="4">
    <source>
        <dbReference type="PROSITE-ProRule" id="PRU00967"/>
    </source>
</evidence>
<evidence type="ECO:0000255" key="5">
    <source>
        <dbReference type="PROSITE-ProRule" id="PRU00968"/>
    </source>
</evidence>
<accession>Q8HG55</accession>
<gene>
    <name type="primary">cob</name>
    <name type="synonym">cytB</name>
</gene>
<protein>
    <recommendedName>
        <fullName>Cytochrome b</fullName>
    </recommendedName>
    <alternativeName>
        <fullName>Complex III subunit 3</fullName>
    </alternativeName>
    <alternativeName>
        <fullName>Complex III subunit III</fullName>
    </alternativeName>
    <alternativeName>
        <fullName>Cytochrome b-c1 complex subunit 3</fullName>
    </alternativeName>
    <alternativeName>
        <fullName>Ubiquinol-cytochrome-c reductase complex cytochrome b subunit</fullName>
    </alternativeName>
</protein>
<comment type="function">
    <text evidence="3">Component of the ubiquinol-cytochrome c reductase complex (complex III or cytochrome b-c1 complex) that is part of the mitochondrial respiratory chain. The b-c1 complex mediates electron transfer from ubiquinol to cytochrome c. Contributes to the generation of a proton gradient across the mitochondrial membrane that is then used for ATP synthesis.</text>
</comment>
<comment type="cofactor">
    <cofactor evidence="3">
        <name>heme b</name>
        <dbReference type="ChEBI" id="CHEBI:60344"/>
    </cofactor>
    <text evidence="3">Binds 2 heme b groups non-covalently.</text>
</comment>
<comment type="subunit">
    <text evidence="3">Fungal cytochrome b-c1 complex contains 10 subunits; 3 respiratory subunits, 2 core proteins and 5 low-molecular weight proteins. Cytochrome b-c1 complex is a homodimer.</text>
</comment>
<comment type="subcellular location">
    <subcellularLocation>
        <location evidence="3">Mitochondrion inner membrane</location>
        <topology evidence="3">Multi-pass membrane protein</topology>
    </subcellularLocation>
</comment>
<comment type="miscellaneous">
    <text evidence="1">Heme 1 (or BL or b562) is low-potential and absorbs at about 562 nm, and heme 2 (or BH or b566) is high-potential and absorbs at about 566 nm.</text>
</comment>
<comment type="similarity">
    <text evidence="4 5">Belongs to the cytochrome b family.</text>
</comment>
<comment type="caution">
    <text evidence="3">The protein contains only eight transmembrane helices, not nine as predicted by bioinformatics tools.</text>
</comment>
<feature type="chain" id="PRO_0000061746" description="Cytochrome b">
    <location>
        <begin position="1"/>
        <end position="385"/>
    </location>
</feature>
<feature type="transmembrane region" description="Helical" evidence="3">
    <location>
        <begin position="32"/>
        <end position="52"/>
    </location>
</feature>
<feature type="transmembrane region" description="Helical" evidence="3">
    <location>
        <begin position="76"/>
        <end position="98"/>
    </location>
</feature>
<feature type="transmembrane region" description="Helical" evidence="3">
    <location>
        <begin position="113"/>
        <end position="133"/>
    </location>
</feature>
<feature type="transmembrane region" description="Helical" evidence="3">
    <location>
        <begin position="179"/>
        <end position="199"/>
    </location>
</feature>
<feature type="transmembrane region" description="Helical" evidence="3">
    <location>
        <begin position="226"/>
        <end position="246"/>
    </location>
</feature>
<feature type="transmembrane region" description="Helical" evidence="3">
    <location>
        <begin position="290"/>
        <end position="310"/>
    </location>
</feature>
<feature type="transmembrane region" description="Helical" evidence="3">
    <location>
        <begin position="322"/>
        <end position="342"/>
    </location>
</feature>
<feature type="transmembrane region" description="Helical" evidence="3">
    <location>
        <begin position="349"/>
        <end position="369"/>
    </location>
</feature>
<feature type="binding site" description="axial binding residue" evidence="5">
    <location>
        <position position="82"/>
    </location>
    <ligand>
        <name>heme b</name>
        <dbReference type="ChEBI" id="CHEBI:60344"/>
        <label>b562</label>
    </ligand>
    <ligandPart>
        <name>Fe</name>
        <dbReference type="ChEBI" id="CHEBI:18248"/>
    </ligandPart>
</feature>
<feature type="binding site" description="axial binding residue" evidence="5">
    <location>
        <position position="96"/>
    </location>
    <ligand>
        <name>heme b</name>
        <dbReference type="ChEBI" id="CHEBI:60344"/>
        <label>b566</label>
    </ligand>
    <ligandPart>
        <name>Fe</name>
        <dbReference type="ChEBI" id="CHEBI:18248"/>
    </ligandPart>
</feature>
<feature type="binding site" description="axial binding residue" evidence="5">
    <location>
        <position position="183"/>
    </location>
    <ligand>
        <name>heme b</name>
        <dbReference type="ChEBI" id="CHEBI:60344"/>
        <label>b562</label>
    </ligand>
    <ligandPart>
        <name>Fe</name>
        <dbReference type="ChEBI" id="CHEBI:18248"/>
    </ligandPart>
</feature>
<feature type="binding site" description="axial binding residue" evidence="5">
    <location>
        <position position="197"/>
    </location>
    <ligand>
        <name>heme b</name>
        <dbReference type="ChEBI" id="CHEBI:60344"/>
        <label>b566</label>
    </ligand>
    <ligandPart>
        <name>Fe</name>
        <dbReference type="ChEBI" id="CHEBI:18248"/>
    </ligandPart>
</feature>
<feature type="binding site" evidence="2">
    <location>
        <position position="202"/>
    </location>
    <ligand>
        <name>a ubiquinone</name>
        <dbReference type="ChEBI" id="CHEBI:16389"/>
    </ligand>
</feature>
<sequence>MRILKSHPLLKLLNAYIIDHSQPTNINYLWNFGSLLGLCLGIQIITGVTLAMHYNPSVAEAFNSVEHIMRDVNNGWLIRYLHSNTASAFFFLVYLHIGRGFYYGSYRSPRTLAWILGVIILILMMGIGFLGYVLPYGQMSLWGATVITNLISAIPWIGQDIVEFIWGGFSVNNATLNRFFALHFVLPFVLAALVIMHLIAVHETAGASNPLGTPAYYDRIPFAPYYLFKDLITIFLFMFGLSIFVFFMPNVLGDSENYIMANPMQTPAAIVPEWYLLPFYAILRSIPNKLLGVIAMFASLVILMVLPKTDLGITKGLQFRPLSKIAFYLFVTNFLLLLQLGAKHVESPFIEFGQISTALYFAYYLIIMPGVSILENTLIDLSQKG</sequence>
<proteinExistence type="inferred from homology"/>
<reference key="1">
    <citation type="journal article" date="2004" name="Fungal Genet. Biol.">
        <title>The analysis of the complete mitochondrial genome of Lecanicillium muscarium (synonym Verticillium lecanii) suggests a minimum common gene organization in mtDNAs of Sordariomycetes: phylogenetic implications.</title>
        <authorList>
            <person name="Kouvelis V.N."/>
            <person name="Ghikas D.V."/>
            <person name="Typas M.A."/>
        </authorList>
    </citation>
    <scope>NUCLEOTIDE SEQUENCE [LARGE SCALE GENOMIC DNA]</scope>
</reference>
<keyword id="KW-0249">Electron transport</keyword>
<keyword id="KW-0349">Heme</keyword>
<keyword id="KW-0408">Iron</keyword>
<keyword id="KW-0472">Membrane</keyword>
<keyword id="KW-0479">Metal-binding</keyword>
<keyword id="KW-0496">Mitochondrion</keyword>
<keyword id="KW-0999">Mitochondrion inner membrane</keyword>
<keyword id="KW-0679">Respiratory chain</keyword>
<keyword id="KW-0812">Transmembrane</keyword>
<keyword id="KW-1133">Transmembrane helix</keyword>
<keyword id="KW-0813">Transport</keyword>
<keyword id="KW-0830">Ubiquinone</keyword>
<dbReference type="EMBL" id="AF487277">
    <property type="protein sequence ID" value="AAO14664.1"/>
    <property type="molecule type" value="Genomic_DNA"/>
</dbReference>
<dbReference type="RefSeq" id="NP_775403.1">
    <property type="nucleotide sequence ID" value="NC_004514.1"/>
</dbReference>
<dbReference type="SMR" id="Q8HG55"/>
<dbReference type="GeneID" id="806193"/>
<dbReference type="GO" id="GO:0005743">
    <property type="term" value="C:mitochondrial inner membrane"/>
    <property type="evidence" value="ECO:0007669"/>
    <property type="project" value="UniProtKB-SubCell"/>
</dbReference>
<dbReference type="GO" id="GO:0045275">
    <property type="term" value="C:respiratory chain complex III"/>
    <property type="evidence" value="ECO:0007669"/>
    <property type="project" value="InterPro"/>
</dbReference>
<dbReference type="GO" id="GO:0046872">
    <property type="term" value="F:metal ion binding"/>
    <property type="evidence" value="ECO:0007669"/>
    <property type="project" value="UniProtKB-KW"/>
</dbReference>
<dbReference type="GO" id="GO:0008121">
    <property type="term" value="F:ubiquinol-cytochrome-c reductase activity"/>
    <property type="evidence" value="ECO:0007669"/>
    <property type="project" value="InterPro"/>
</dbReference>
<dbReference type="GO" id="GO:0006122">
    <property type="term" value="P:mitochondrial electron transport, ubiquinol to cytochrome c"/>
    <property type="evidence" value="ECO:0007669"/>
    <property type="project" value="TreeGrafter"/>
</dbReference>
<dbReference type="CDD" id="cd00290">
    <property type="entry name" value="cytochrome_b_C"/>
    <property type="match status" value="1"/>
</dbReference>
<dbReference type="CDD" id="cd00284">
    <property type="entry name" value="Cytochrome_b_N"/>
    <property type="match status" value="1"/>
</dbReference>
<dbReference type="FunFam" id="1.20.810.10:FF:000002">
    <property type="entry name" value="Cytochrome b"/>
    <property type="match status" value="1"/>
</dbReference>
<dbReference type="Gene3D" id="1.20.810.10">
    <property type="entry name" value="Cytochrome Bc1 Complex, Chain C"/>
    <property type="match status" value="1"/>
</dbReference>
<dbReference type="InterPro" id="IPR005798">
    <property type="entry name" value="Cyt_b/b6_C"/>
</dbReference>
<dbReference type="InterPro" id="IPR036150">
    <property type="entry name" value="Cyt_b/b6_C_sf"/>
</dbReference>
<dbReference type="InterPro" id="IPR005797">
    <property type="entry name" value="Cyt_b/b6_N"/>
</dbReference>
<dbReference type="InterPro" id="IPR027387">
    <property type="entry name" value="Cytb/b6-like_sf"/>
</dbReference>
<dbReference type="InterPro" id="IPR030689">
    <property type="entry name" value="Cytochrome_b"/>
</dbReference>
<dbReference type="InterPro" id="IPR048260">
    <property type="entry name" value="Cytochrome_b_C_euk/bac"/>
</dbReference>
<dbReference type="InterPro" id="IPR048259">
    <property type="entry name" value="Cytochrome_b_N_euk/bac"/>
</dbReference>
<dbReference type="InterPro" id="IPR016174">
    <property type="entry name" value="Di-haem_cyt_TM"/>
</dbReference>
<dbReference type="PANTHER" id="PTHR19271">
    <property type="entry name" value="CYTOCHROME B"/>
    <property type="match status" value="1"/>
</dbReference>
<dbReference type="PANTHER" id="PTHR19271:SF16">
    <property type="entry name" value="CYTOCHROME B"/>
    <property type="match status" value="1"/>
</dbReference>
<dbReference type="Pfam" id="PF00032">
    <property type="entry name" value="Cytochrom_B_C"/>
    <property type="match status" value="1"/>
</dbReference>
<dbReference type="Pfam" id="PF00033">
    <property type="entry name" value="Cytochrome_B"/>
    <property type="match status" value="1"/>
</dbReference>
<dbReference type="PIRSF" id="PIRSF038885">
    <property type="entry name" value="COB"/>
    <property type="match status" value="1"/>
</dbReference>
<dbReference type="SUPFAM" id="SSF81648">
    <property type="entry name" value="a domain/subunit of cytochrome bc1 complex (Ubiquinol-cytochrome c reductase)"/>
    <property type="match status" value="1"/>
</dbReference>
<dbReference type="SUPFAM" id="SSF81342">
    <property type="entry name" value="Transmembrane di-heme cytochromes"/>
    <property type="match status" value="1"/>
</dbReference>
<dbReference type="PROSITE" id="PS51003">
    <property type="entry name" value="CYTB_CTER"/>
    <property type="match status" value="1"/>
</dbReference>
<dbReference type="PROSITE" id="PS51002">
    <property type="entry name" value="CYTB_NTER"/>
    <property type="match status" value="1"/>
</dbReference>
<organism>
    <name type="scientific">Akanthomyces muscarius</name>
    <name type="common">Entomopathogenic fungus</name>
    <name type="synonym">Lecanicillium muscarium</name>
    <dbReference type="NCBI Taxonomy" id="2231603"/>
    <lineage>
        <taxon>Eukaryota</taxon>
        <taxon>Fungi</taxon>
        <taxon>Dikarya</taxon>
        <taxon>Ascomycota</taxon>
        <taxon>Pezizomycotina</taxon>
        <taxon>Sordariomycetes</taxon>
        <taxon>Hypocreomycetidae</taxon>
        <taxon>Hypocreales</taxon>
        <taxon>Cordycipitaceae</taxon>
        <taxon>Akanthomyces</taxon>
    </lineage>
</organism>
<name>CYB_AKAMU</name>